<feature type="signal peptide" evidence="1">
    <location>
        <begin position="1"/>
        <end position="29"/>
    </location>
</feature>
<feature type="chain" id="PRO_0000033772" description="Latency-associated peptide" evidence="1">
    <location>
        <begin position="30"/>
        <end position="278"/>
    </location>
</feature>
<feature type="chain" id="PRO_0000033773" description="Transforming growth factor beta-1" evidence="1">
    <location>
        <begin position="279"/>
        <end position="390"/>
    </location>
</feature>
<feature type="region of interest" description="Straightjacket domain" evidence="3">
    <location>
        <begin position="30"/>
        <end position="74"/>
    </location>
</feature>
<feature type="region of interest" description="Arm domain" evidence="3">
    <location>
        <begin position="75"/>
        <end position="271"/>
    </location>
</feature>
<feature type="region of interest" description="Bowtie tail" evidence="1">
    <location>
        <begin position="226"/>
        <end position="252"/>
    </location>
</feature>
<feature type="short sequence motif" description="Cell attachment site" evidence="4">
    <location>
        <begin position="244"/>
        <end position="246"/>
    </location>
</feature>
<feature type="site" description="Cleavage; by FURIN" evidence="1">
    <location>
        <begin position="278"/>
        <end position="279"/>
    </location>
</feature>
<feature type="glycosylation site" description="N-linked (GlcNAc...) asparagine" evidence="4">
    <location>
        <position position="82"/>
    </location>
</feature>
<feature type="glycosylation site" description="N-linked (GlcNAc...) asparagine" evidence="4">
    <location>
        <position position="136"/>
    </location>
</feature>
<feature type="glycosylation site" description="N-linked (GlcNAc...) asparagine" evidence="4">
    <location>
        <position position="176"/>
    </location>
</feature>
<feature type="disulfide bond" description="Interchain (with C-1359 or C-1384 in LTBP1); in inactive form" evidence="3">
    <location>
        <position position="33"/>
    </location>
</feature>
<feature type="disulfide bond" description="Interchain (with C-225)" evidence="1">
    <location>
        <position position="223"/>
    </location>
</feature>
<feature type="disulfide bond" description="Interchain (with C-223)" evidence="1">
    <location>
        <position position="225"/>
    </location>
</feature>
<feature type="disulfide bond" evidence="1">
    <location>
        <begin position="285"/>
        <end position="294"/>
    </location>
</feature>
<feature type="disulfide bond" evidence="1">
    <location>
        <begin position="293"/>
        <end position="356"/>
    </location>
</feature>
<feature type="disulfide bond" evidence="1">
    <location>
        <begin position="322"/>
        <end position="387"/>
    </location>
</feature>
<feature type="disulfide bond" evidence="1">
    <location>
        <begin position="326"/>
        <end position="389"/>
    </location>
</feature>
<feature type="disulfide bond" description="Interchain" evidence="1">
    <location>
        <position position="355"/>
    </location>
</feature>
<dbReference type="EMBL" id="X76916">
    <property type="protein sequence ID" value="CAA54242.1"/>
    <property type="molecule type" value="mRNA"/>
</dbReference>
<dbReference type="EMBL" id="L36038">
    <property type="protein sequence ID" value="AAA31526.1"/>
    <property type="molecule type" value="mRNA"/>
</dbReference>
<dbReference type="PIR" id="I46463">
    <property type="entry name" value="I46463"/>
</dbReference>
<dbReference type="RefSeq" id="NP_001009400.1">
    <property type="nucleotide sequence ID" value="NM_001009400.2"/>
</dbReference>
<dbReference type="SMR" id="P50414"/>
<dbReference type="STRING" id="9940.ENSOARP00000008013"/>
<dbReference type="GlyCosmos" id="P50414">
    <property type="glycosylation" value="3 sites, No reported glycans"/>
</dbReference>
<dbReference type="PaxDb" id="9940-ENSOARP00000008013"/>
<dbReference type="GeneID" id="443417"/>
<dbReference type="KEGG" id="oas:443417"/>
<dbReference type="CTD" id="7040"/>
<dbReference type="eggNOG" id="KOG3900">
    <property type="taxonomic scope" value="Eukaryota"/>
</dbReference>
<dbReference type="OrthoDB" id="8863549at2759"/>
<dbReference type="Proteomes" id="UP000002356">
    <property type="component" value="Unplaced"/>
</dbReference>
<dbReference type="GO" id="GO:0072562">
    <property type="term" value="C:blood microparticle"/>
    <property type="evidence" value="ECO:0000250"/>
    <property type="project" value="AgBase"/>
</dbReference>
<dbReference type="GO" id="GO:0009986">
    <property type="term" value="C:cell surface"/>
    <property type="evidence" value="ECO:0000250"/>
    <property type="project" value="UniProtKB"/>
</dbReference>
<dbReference type="GO" id="GO:0005737">
    <property type="term" value="C:cytoplasm"/>
    <property type="evidence" value="ECO:0000250"/>
    <property type="project" value="UniProtKB"/>
</dbReference>
<dbReference type="GO" id="GO:0005615">
    <property type="term" value="C:extracellular space"/>
    <property type="evidence" value="ECO:0000250"/>
    <property type="project" value="UniProtKB"/>
</dbReference>
<dbReference type="GO" id="GO:0005634">
    <property type="term" value="C:nucleus"/>
    <property type="evidence" value="ECO:0000250"/>
    <property type="project" value="UniProtKB"/>
</dbReference>
<dbReference type="GO" id="GO:0005125">
    <property type="term" value="F:cytokine activity"/>
    <property type="evidence" value="ECO:0007669"/>
    <property type="project" value="TreeGrafter"/>
</dbReference>
<dbReference type="GO" id="GO:0008083">
    <property type="term" value="F:growth factor activity"/>
    <property type="evidence" value="ECO:0007669"/>
    <property type="project" value="UniProtKB-KW"/>
</dbReference>
<dbReference type="GO" id="GO:0034713">
    <property type="term" value="F:type I transforming growth factor beta receptor binding"/>
    <property type="evidence" value="ECO:0000250"/>
    <property type="project" value="AgBase"/>
</dbReference>
<dbReference type="GO" id="GO:0005114">
    <property type="term" value="F:type II transforming growth factor beta receptor binding"/>
    <property type="evidence" value="ECO:0000250"/>
    <property type="project" value="UniProtKB"/>
</dbReference>
<dbReference type="GO" id="GO:0034714">
    <property type="term" value="F:type III transforming growth factor beta receptor binding"/>
    <property type="evidence" value="ECO:0000250"/>
    <property type="project" value="AgBase"/>
</dbReference>
<dbReference type="GO" id="GO:0006754">
    <property type="term" value="P:ATP biosynthetic process"/>
    <property type="evidence" value="ECO:0000250"/>
    <property type="project" value="UniProtKB"/>
</dbReference>
<dbReference type="GO" id="GO:0045216">
    <property type="term" value="P:cell-cell junction organization"/>
    <property type="evidence" value="ECO:0000250"/>
    <property type="project" value="UniProtKB"/>
</dbReference>
<dbReference type="GO" id="GO:0071560">
    <property type="term" value="P:cellular response to transforming growth factor beta stimulus"/>
    <property type="evidence" value="ECO:0000250"/>
    <property type="project" value="AgBase"/>
</dbReference>
<dbReference type="GO" id="GO:0002062">
    <property type="term" value="P:chondrocyte differentiation"/>
    <property type="evidence" value="ECO:0000250"/>
    <property type="project" value="UniProtKB"/>
</dbReference>
<dbReference type="GO" id="GO:0001837">
    <property type="term" value="P:epithelial to mesenchymal transition"/>
    <property type="evidence" value="ECO:0000250"/>
    <property type="project" value="UniProtKB"/>
</dbReference>
<dbReference type="GO" id="GO:0085029">
    <property type="term" value="P:extracellular matrix assembly"/>
    <property type="evidence" value="ECO:0000250"/>
    <property type="project" value="UniProtKB"/>
</dbReference>
<dbReference type="GO" id="GO:0097191">
    <property type="term" value="P:extrinsic apoptotic signaling pathway"/>
    <property type="evidence" value="ECO:0000250"/>
    <property type="project" value="UniProtKB"/>
</dbReference>
<dbReference type="GO" id="GO:0002244">
    <property type="term" value="P:hematopoietic progenitor cell differentiation"/>
    <property type="evidence" value="ECO:0000250"/>
    <property type="project" value="UniProtKB"/>
</dbReference>
<dbReference type="GO" id="GO:0030214">
    <property type="term" value="P:hyaluronan catabolic process"/>
    <property type="evidence" value="ECO:0000250"/>
    <property type="project" value="UniProtKB"/>
</dbReference>
<dbReference type="GO" id="GO:0031293">
    <property type="term" value="P:membrane protein intracellular domain proteolysis"/>
    <property type="evidence" value="ECO:0000250"/>
    <property type="project" value="UniProtKB"/>
</dbReference>
<dbReference type="GO" id="GO:0043537">
    <property type="term" value="P:negative regulation of blood vessel endothelial cell migration"/>
    <property type="evidence" value="ECO:0000250"/>
    <property type="project" value="UniProtKB"/>
</dbReference>
<dbReference type="GO" id="GO:0045786">
    <property type="term" value="P:negative regulation of cell cycle"/>
    <property type="evidence" value="ECO:0000250"/>
    <property type="project" value="UniProtKB"/>
</dbReference>
<dbReference type="GO" id="GO:0030308">
    <property type="term" value="P:negative regulation of cell growth"/>
    <property type="evidence" value="ECO:0000250"/>
    <property type="project" value="UniProtKB"/>
</dbReference>
<dbReference type="GO" id="GO:0008285">
    <property type="term" value="P:negative regulation of cell population proliferation"/>
    <property type="evidence" value="ECO:0000250"/>
    <property type="project" value="UniProtKB"/>
</dbReference>
<dbReference type="GO" id="GO:2000048">
    <property type="term" value="P:negative regulation of cell-cell adhesion mediated by cadherin"/>
    <property type="evidence" value="ECO:0000250"/>
    <property type="project" value="UniProtKB"/>
</dbReference>
<dbReference type="GO" id="GO:0045892">
    <property type="term" value="P:negative regulation of DNA-templated transcription"/>
    <property type="evidence" value="ECO:0000250"/>
    <property type="project" value="UniProtKB"/>
</dbReference>
<dbReference type="GO" id="GO:0050680">
    <property type="term" value="P:negative regulation of epithelial cell proliferation"/>
    <property type="evidence" value="ECO:0000250"/>
    <property type="project" value="UniProtKB"/>
</dbReference>
<dbReference type="GO" id="GO:0045599">
    <property type="term" value="P:negative regulation of fat cell differentiation"/>
    <property type="evidence" value="ECO:0000250"/>
    <property type="project" value="UniProtKB"/>
</dbReference>
<dbReference type="GO" id="GO:0010629">
    <property type="term" value="P:negative regulation of gene expression"/>
    <property type="evidence" value="ECO:0000250"/>
    <property type="project" value="BHF-UCL"/>
</dbReference>
<dbReference type="GO" id="GO:1900126">
    <property type="term" value="P:negative regulation of hyaluronan biosynthetic process"/>
    <property type="evidence" value="ECO:0000250"/>
    <property type="project" value="UniProtKB"/>
</dbReference>
<dbReference type="GO" id="GO:0010936">
    <property type="term" value="P:negative regulation of macrophage cytokine production"/>
    <property type="evidence" value="ECO:0000250"/>
    <property type="project" value="AgBase"/>
</dbReference>
<dbReference type="GO" id="GO:0045662">
    <property type="term" value="P:negative regulation of myoblast differentiation"/>
    <property type="evidence" value="ECO:0000250"/>
    <property type="project" value="UniProtKB"/>
</dbReference>
<dbReference type="GO" id="GO:0048642">
    <property type="term" value="P:negative regulation of skeletal muscle tissue development"/>
    <property type="evidence" value="ECO:0000250"/>
    <property type="project" value="UniProtKB"/>
</dbReference>
<dbReference type="GO" id="GO:0071895">
    <property type="term" value="P:odontoblast differentiation"/>
    <property type="evidence" value="ECO:0000250"/>
    <property type="project" value="UniProtKB"/>
</dbReference>
<dbReference type="GO" id="GO:0006796">
    <property type="term" value="P:phosphate-containing compound metabolic process"/>
    <property type="evidence" value="ECO:0000250"/>
    <property type="project" value="UniProtKB"/>
</dbReference>
<dbReference type="GO" id="GO:0043536">
    <property type="term" value="P:positive regulation of blood vessel endothelial cell migration"/>
    <property type="evidence" value="ECO:0000250"/>
    <property type="project" value="UniProtKB"/>
</dbReference>
<dbReference type="GO" id="GO:0051781">
    <property type="term" value="P:positive regulation of cell division"/>
    <property type="evidence" value="ECO:0007669"/>
    <property type="project" value="UniProtKB-KW"/>
</dbReference>
<dbReference type="GO" id="GO:0030335">
    <property type="term" value="P:positive regulation of cell migration"/>
    <property type="evidence" value="ECO:0000250"/>
    <property type="project" value="UniProtKB"/>
</dbReference>
<dbReference type="GO" id="GO:0008284">
    <property type="term" value="P:positive regulation of cell population proliferation"/>
    <property type="evidence" value="ECO:0000250"/>
    <property type="project" value="UniProtKB"/>
</dbReference>
<dbReference type="GO" id="GO:0050921">
    <property type="term" value="P:positive regulation of chemotaxis"/>
    <property type="evidence" value="ECO:0000250"/>
    <property type="project" value="UniProtKB"/>
</dbReference>
<dbReference type="GO" id="GO:0032967">
    <property type="term" value="P:positive regulation of collagen biosynthetic process"/>
    <property type="evidence" value="ECO:0000250"/>
    <property type="project" value="UniProtKB"/>
</dbReference>
<dbReference type="GO" id="GO:0045742">
    <property type="term" value="P:positive regulation of epidermal growth factor receptor signaling pathway"/>
    <property type="evidence" value="ECO:0000250"/>
    <property type="project" value="UniProtKB"/>
</dbReference>
<dbReference type="GO" id="GO:0010718">
    <property type="term" value="P:positive regulation of epithelial to mesenchymal transition"/>
    <property type="evidence" value="ECO:0000250"/>
    <property type="project" value="UniProtKB"/>
</dbReference>
<dbReference type="GO" id="GO:0070374">
    <property type="term" value="P:positive regulation of ERK1 and ERK2 cascade"/>
    <property type="evidence" value="ECO:0000250"/>
    <property type="project" value="UniProtKB"/>
</dbReference>
<dbReference type="GO" id="GO:0010763">
    <property type="term" value="P:positive regulation of fibroblast migration"/>
    <property type="evidence" value="ECO:0000250"/>
    <property type="project" value="UniProtKB"/>
</dbReference>
<dbReference type="GO" id="GO:0010628">
    <property type="term" value="P:positive regulation of gene expression"/>
    <property type="evidence" value="ECO:0000250"/>
    <property type="project" value="UniProtKB"/>
</dbReference>
<dbReference type="GO" id="GO:0032740">
    <property type="term" value="P:positive regulation of interleukin-17 production"/>
    <property type="evidence" value="ECO:0000250"/>
    <property type="project" value="UniProtKB"/>
</dbReference>
<dbReference type="GO" id="GO:0048298">
    <property type="term" value="P:positive regulation of isotype switching to IgA isotypes"/>
    <property type="evidence" value="ECO:0000250"/>
    <property type="project" value="AgBase"/>
</dbReference>
<dbReference type="GO" id="GO:0014008">
    <property type="term" value="P:positive regulation of microglia differentiation"/>
    <property type="evidence" value="ECO:0000250"/>
    <property type="project" value="UniProtKB"/>
</dbReference>
<dbReference type="GO" id="GO:0042307">
    <property type="term" value="P:positive regulation of protein import into nucleus"/>
    <property type="evidence" value="ECO:0000250"/>
    <property type="project" value="AgBase"/>
</dbReference>
<dbReference type="GO" id="GO:0051247">
    <property type="term" value="P:positive regulation of protein metabolic process"/>
    <property type="evidence" value="ECO:0000250"/>
    <property type="project" value="UniProtKB"/>
</dbReference>
<dbReference type="GO" id="GO:0050714">
    <property type="term" value="P:positive regulation of protein secretion"/>
    <property type="evidence" value="ECO:0000250"/>
    <property type="project" value="UniProtKB"/>
</dbReference>
<dbReference type="GO" id="GO:0031334">
    <property type="term" value="P:positive regulation of protein-containing complex assembly"/>
    <property type="evidence" value="ECO:0000250"/>
    <property type="project" value="UniProtKB"/>
</dbReference>
<dbReference type="GO" id="GO:0060391">
    <property type="term" value="P:positive regulation of SMAD protein signal transduction"/>
    <property type="evidence" value="ECO:0000250"/>
    <property type="project" value="UniProtKB"/>
</dbReference>
<dbReference type="GO" id="GO:0032930">
    <property type="term" value="P:positive regulation of superoxide anion generation"/>
    <property type="evidence" value="ECO:0000250"/>
    <property type="project" value="UniProtKB"/>
</dbReference>
<dbReference type="GO" id="GO:0045944">
    <property type="term" value="P:positive regulation of transcription by RNA polymerase II"/>
    <property type="evidence" value="ECO:0000250"/>
    <property type="project" value="AgBase"/>
</dbReference>
<dbReference type="GO" id="GO:0032801">
    <property type="term" value="P:receptor catabolic process"/>
    <property type="evidence" value="ECO:0000250"/>
    <property type="project" value="UniProtKB"/>
</dbReference>
<dbReference type="GO" id="GO:0070723">
    <property type="term" value="P:response to cholesterol"/>
    <property type="evidence" value="ECO:0000250"/>
    <property type="project" value="UniProtKB"/>
</dbReference>
<dbReference type="GO" id="GO:0032355">
    <property type="term" value="P:response to estradiol"/>
    <property type="evidence" value="ECO:0000250"/>
    <property type="project" value="UniProtKB"/>
</dbReference>
<dbReference type="GO" id="GO:0032570">
    <property type="term" value="P:response to progesterone"/>
    <property type="evidence" value="ECO:0000250"/>
    <property type="project" value="UniProtKB"/>
</dbReference>
<dbReference type="GO" id="GO:0009611">
    <property type="term" value="P:response to wounding"/>
    <property type="evidence" value="ECO:0000250"/>
    <property type="project" value="AgBase"/>
</dbReference>
<dbReference type="GO" id="GO:0007435">
    <property type="term" value="P:salivary gland morphogenesis"/>
    <property type="evidence" value="ECO:0000250"/>
    <property type="project" value="AgBase"/>
</dbReference>
<dbReference type="GO" id="GO:0007179">
    <property type="term" value="P:transforming growth factor beta receptor signaling pathway"/>
    <property type="evidence" value="ECO:0000250"/>
    <property type="project" value="UniProtKB"/>
</dbReference>
<dbReference type="CDD" id="cd19384">
    <property type="entry name" value="TGF_beta_TGFB1"/>
    <property type="match status" value="1"/>
</dbReference>
<dbReference type="FunFam" id="2.10.90.10:FF:000004">
    <property type="entry name" value="Transforming growth factor beta"/>
    <property type="match status" value="1"/>
</dbReference>
<dbReference type="FunFam" id="2.60.120.970:FF:000010">
    <property type="entry name" value="Transforming growth factor beta"/>
    <property type="match status" value="1"/>
</dbReference>
<dbReference type="Gene3D" id="2.60.120.970">
    <property type="match status" value="1"/>
</dbReference>
<dbReference type="Gene3D" id="2.10.90.10">
    <property type="entry name" value="Cystine-knot cytokines"/>
    <property type="match status" value="1"/>
</dbReference>
<dbReference type="InterPro" id="IPR029034">
    <property type="entry name" value="Cystine-knot_cytokine"/>
</dbReference>
<dbReference type="InterPro" id="IPR001839">
    <property type="entry name" value="TGF-b_C"/>
</dbReference>
<dbReference type="InterPro" id="IPR001111">
    <property type="entry name" value="TGF-b_propeptide"/>
</dbReference>
<dbReference type="InterPro" id="IPR016319">
    <property type="entry name" value="TGF-beta"/>
</dbReference>
<dbReference type="InterPro" id="IPR015615">
    <property type="entry name" value="TGF-beta-rel"/>
</dbReference>
<dbReference type="InterPro" id="IPR003939">
    <property type="entry name" value="TGFb1"/>
</dbReference>
<dbReference type="InterPro" id="IPR017948">
    <property type="entry name" value="TGFb_CS"/>
</dbReference>
<dbReference type="PANTHER" id="PTHR11848">
    <property type="entry name" value="TGF-BETA FAMILY"/>
    <property type="match status" value="1"/>
</dbReference>
<dbReference type="PANTHER" id="PTHR11848:SF125">
    <property type="entry name" value="TRANSFORMING GROWTH FACTOR BETA-1 PROPROTEIN"/>
    <property type="match status" value="1"/>
</dbReference>
<dbReference type="Pfam" id="PF00019">
    <property type="entry name" value="TGF_beta"/>
    <property type="match status" value="1"/>
</dbReference>
<dbReference type="Pfam" id="PF00688">
    <property type="entry name" value="TGFb_propeptide"/>
    <property type="match status" value="1"/>
</dbReference>
<dbReference type="PIRSF" id="PIRSF001787">
    <property type="entry name" value="TGF-beta"/>
    <property type="match status" value="1"/>
</dbReference>
<dbReference type="PRINTS" id="PR01423">
    <property type="entry name" value="TGFBETA"/>
</dbReference>
<dbReference type="PRINTS" id="PR01424">
    <property type="entry name" value="TGFBETA1"/>
</dbReference>
<dbReference type="SMART" id="SM00204">
    <property type="entry name" value="TGFB"/>
    <property type="match status" value="1"/>
</dbReference>
<dbReference type="SUPFAM" id="SSF57501">
    <property type="entry name" value="Cystine-knot cytokines"/>
    <property type="match status" value="1"/>
</dbReference>
<dbReference type="PROSITE" id="PS00250">
    <property type="entry name" value="TGF_BETA_1"/>
    <property type="match status" value="1"/>
</dbReference>
<dbReference type="PROSITE" id="PS51362">
    <property type="entry name" value="TGF_BETA_2"/>
    <property type="match status" value="1"/>
</dbReference>
<accession>P50414</accession>
<keyword id="KW-0165">Cleavage on pair of basic residues</keyword>
<keyword id="KW-1015">Disulfide bond</keyword>
<keyword id="KW-0272">Extracellular matrix</keyword>
<keyword id="KW-0325">Glycoprotein</keyword>
<keyword id="KW-0339">Growth factor</keyword>
<keyword id="KW-0497">Mitogen</keyword>
<keyword id="KW-1185">Reference proteome</keyword>
<keyword id="KW-0964">Secreted</keyword>
<keyword id="KW-0732">Signal</keyword>
<sequence length="390" mass="44291">MPPSGLRLLPLLLPLLWLLMLTPGRPVAGLSTCKTIDMELVKRKGIEAIRGQILSKLRLASPPSQGDVPPGPLPEAILALYNSTRDRVAGESAETEPEPEADYYAKEVTRVLMVEYGNKIYDKMKSSSHSIYMFFNTSELREAVPEPVLLSRADVRLLRLKLKVEQHVELYQKYSNNSWRYLSNRLLAPSDSPEWLSFDVTGVVRQWLTHREEIEGFRLSAHCSCDSKDNTLQVDINGFSSGRRGDLATIHGMNRPFLLLMATPLERAQHLHSSRHRRALDTNYCFSSTEKNCCVRQLYIDFRKDLGWKWIHEPKGYHANFCLGPCPYIWSLDTQYSKVLALYNQHNPGASAAPCCVPQALEPLPIVYYVGRKPKVEQLSNMIVRSCKCS</sequence>
<evidence type="ECO:0000250" key="1">
    <source>
        <dbReference type="UniProtKB" id="P01137"/>
    </source>
</evidence>
<evidence type="ECO:0000250" key="2">
    <source>
        <dbReference type="UniProtKB" id="P04202"/>
    </source>
</evidence>
<evidence type="ECO:0000250" key="3">
    <source>
        <dbReference type="UniProtKB" id="P07200"/>
    </source>
</evidence>
<evidence type="ECO:0000255" key="4"/>
<evidence type="ECO:0000305" key="5"/>
<name>TGFB1_SHEEP</name>
<reference key="1">
    <citation type="journal article" date="1994" name="Gene">
        <title>Sequence and chromosomal localisation of the gene encoding ovine latent transforming growth factor-beta 1.</title>
        <authorList>
            <person name="Woodall C.J."/>
            <person name="McLaren L.J."/>
            <person name="Watt N.J."/>
        </authorList>
    </citation>
    <scope>NUCLEOTIDE SEQUENCE [MRNA]</scope>
</reference>
<reference key="2">
    <citation type="journal article" date="1995" name="Comp. Biochem. Physiol.">
        <title>Growth factor expression in skin during wool follicle development.</title>
        <authorList>
            <person name="Sutton R."/>
            <person name="Ward W.G."/>
            <person name="Raphael K.A."/>
            <person name="Cam G.R."/>
        </authorList>
    </citation>
    <scope>NUCLEOTIDE SEQUENCE [MRNA] OF 281-390</scope>
    <source>
        <strain>Merino</strain>
        <tissue>Skin</tissue>
    </source>
</reference>
<comment type="function">
    <text evidence="1">Transforming growth factor beta-1 proprotein: Precursor of the Latency-associated peptide (LAP) and Transforming growth factor beta-1 (TGF-beta-1) chains, which constitute the regulatory and active subunit of TGF-beta-1, respectively.</text>
</comment>
<comment type="function">
    <molecule>Latency-associated peptide</molecule>
    <text evidence="1">Required to maintain the Transforming growth factor beta-1 (TGF-beta-1) chain in a latent state during storage in extracellular matrix. Associates non-covalently with TGF-beta-1 and regulates its activation via interaction with 'milieu molecules', such as LTBP1, LRRC32/GARP and LRRC33/NRROS, that control activation of TGF-beta-1. Interaction with LRRC33/NRROS regulates activation of TGF-beta-1 in macrophages and microglia. Interaction with LRRC32/GARP controls activation of TGF-beta-1 on the surface of activated regulatory T-cells (Tregs). Interaction with integrins (ITGAV:ITGB6 or ITGAV:ITGB8) results in distortion of the Latency-associated peptide chain and subsequent release of the active TGF-beta-1.</text>
</comment>
<comment type="function">
    <molecule>Transforming growth factor beta-1</molecule>
    <text evidence="1 2">Multifunctional protein that regulates the growth and differentiation of various cell types and is involved in various processes, such as normal development, immune function, microglia function and responses to neurodegeneration (By similarity). Activation into mature form follows different steps: following cleavage of the proprotein in the Golgi apparatus, Latency-associated peptide (LAP) and Transforming growth factor beta-1 (TGF-beta-1) chains remain non-covalently linked rendering TGF-beta-1 inactive during storage in extracellular matrix. At the same time, LAP chain interacts with 'milieu molecules', such as LTBP1, LRRC32/GARP and LRRC33/NRROS that control activation of TGF-beta-1 and maintain it in a latent state during storage in extracellular milieus. TGF-beta-1 is released from LAP by integrins (ITGAV:ITGB6 or ITGAV:ITGB8): integrin-binding to LAP stabilizes an alternative conformation of the LAP bowtie tail and results in distortion of the LAP chain and subsequent release of the active TGF-beta-1. Once activated following release of LAP, TGF-beta-1 acts by binding to TGF-beta receptors (TGFBR1 and TGFBR2), which transduce signal (By similarity). While expressed by many cells types, TGF-beta-1 only has a very localized range of action within cell environment thanks to fine regulation of its activation by Latency-associated peptide chain (LAP) and 'milieu molecules'. Plays an important role in bone remodeling: acts as a potent stimulator of osteoblastic bone formation, causing chemotaxis, proliferation and differentiation in committed osteoblasts. Can promote either T-helper 17 cells (Th17) or regulatory T-cells (Treg) lineage differentiation in a concentration-dependent manner. At high concentrations, leads to FOXP3-mediated suppression of RORC and down-regulation of IL-17 expression, favoring Treg cell development. At low concentrations in concert with IL-6 and IL-21, leads to expression of the IL-17 and IL-23 receptors, favoring differentiation to Th17 cells (By similarity). Stimulates sustained production of collagen through the activation of CREB3L1 by regulated intramembrane proteolysis (RIP). Mediates SMAD2/3 activation by inducing its phosphorylation and subsequent translocation to the nucleus. Positively regulates odontoblastic differentiation in dental papilla cells, via promotion of IPO7-mediated translocation of phosphorylated SMAD2 to the nucleus and subsequent transcription of target genes (By similarity). Can induce epithelial-to-mesenchymal transition (EMT) and cell migration in various cell types (By similarity).</text>
</comment>
<comment type="subunit">
    <text evidence="1 2">Homodimer; disulfide-linked. Interacts with the serine proteases, HTRA1 and HTRA3: the interaction with either inhibits TGFB1-mediated signaling and the HTRA protease activity is required for this inhibition. May interact with THSD4; this interaction may lead to sequestration by FBN1 microfibril assembly and attenuation of TGFB signaling. Interacts with CD109, DPT and ASPN. Interacts with EFEMP2. Interacts with TSKU; the interaction contributes to regulation of the hair cycle. Interacts with TGFBR3 (By similarity).</text>
</comment>
<comment type="subunit">
    <molecule>Latency-associated peptide</molecule>
    <text evidence="1 2">Homodimer; disulfide-linked. Interacts with transforming growth factor beta-1 (TGF-beta-1) chain; interaction is non-covalent and maintains TGF-beta-1 in a latent state; each latency-associated peptide (LAP) monomer interacts with TGF-beta-1 in the other monomer. Interacts with LTBP1; leading to regulation of TGF-beta-1 activation. Interacts with LRRC32/GARP; leading to regulation of TGF-beta-1 activation on the surface of activated regulatory T-cells (Tregs). Interacts with LRRC33/NRROS; leading to regulation of TGF-beta-1 activation in macrophages and microglia. Interacts (via cell attachment site) with integrins ITGAV and ITGB6 (ITGAV:ITGB6), leading to release of the active TGF-beta-1. Interacts with NREP; the interaction results in a decrease in TGFB1 autoinduction. Interacts with HSP90AB1; inhibits latent TGFB1 activation.</text>
</comment>
<comment type="subunit">
    <molecule>Transforming growth factor beta-1</molecule>
    <text evidence="1">Homodimer; disulfide-linked. Interacts with TGF-beta receptors (TGFBR1 and TGFBR2), leading to signal transduction.</text>
</comment>
<comment type="subcellular location">
    <molecule>Latency-associated peptide</molecule>
    <subcellularLocation>
        <location evidence="1">Secreted</location>
        <location evidence="1">Extracellular space</location>
        <location evidence="1">Extracellular matrix</location>
    </subcellularLocation>
</comment>
<comment type="subcellular location">
    <molecule>Transforming growth factor beta-1</molecule>
    <subcellularLocation>
        <location evidence="1">Secreted</location>
    </subcellularLocation>
</comment>
<comment type="domain">
    <molecule>Latency-associated peptide</molecule>
    <text evidence="3">The 'straitjacket' and 'arm' domains encircle the Transforming growth factor beta-1 (TGF-beta-1) monomers and are fastened together by strong bonding between Lys-56 and Tyr-103/Tyr-104.</text>
</comment>
<comment type="domain">
    <molecule>Latency-associated peptide</molecule>
    <text evidence="1">The cell attachment site motif mediates binding to integrins (ITGAV:ITGB6 or ITGAV:ITGB8). The motif locates to a long loop in the arm domain called the bowtie tail. Integrin-binding stabilizes an alternative conformation of the bowtie tail. Activation by integrin requires force application by the actin cytoskeleton, which is resisted by the 'milieu molecules' (such as LTBP1, LRRC32/GARP and/or LRRC33/NRROS), resulting in distortion of the prodomain and release of the active TGF-beta-1.</text>
</comment>
<comment type="PTM">
    <text evidence="1">Transforming growth factor beta-1 proprotein: The precursor proprotein is cleaved in the Golgi apparatus by FURIN to form Transforming growth factor beta-1 (TGF-beta-1) and Latency-associated peptide (LAP) chains, which remain non-covalently linked, rendering TGF-beta-1 inactive.</text>
</comment>
<comment type="PTM">
    <molecule>Latency-associated peptide</molecule>
    <text evidence="1">N-glycosylated. Deglycosylation leads to activation of Transforming growth factor beta-1 (TGF-beta-1); mechanisms triggering deglycosylation-driven activation of TGF-beta-1 are however unclear.</text>
</comment>
<comment type="similarity">
    <text evidence="5">Belongs to the TGF-beta family.</text>
</comment>
<proteinExistence type="evidence at transcript level"/>
<protein>
    <recommendedName>
        <fullName>Transforming growth factor beta-1 proprotein</fullName>
    </recommendedName>
    <component>
        <recommendedName>
            <fullName>Latency-associated peptide</fullName>
            <shortName>LAP</shortName>
        </recommendedName>
    </component>
    <component>
        <recommendedName>
            <fullName>Transforming growth factor beta-1</fullName>
            <shortName>TGF-beta-1</shortName>
        </recommendedName>
    </component>
</protein>
<gene>
    <name type="primary">TGFB1</name>
</gene>
<organism>
    <name type="scientific">Ovis aries</name>
    <name type="common">Sheep</name>
    <dbReference type="NCBI Taxonomy" id="9940"/>
    <lineage>
        <taxon>Eukaryota</taxon>
        <taxon>Metazoa</taxon>
        <taxon>Chordata</taxon>
        <taxon>Craniata</taxon>
        <taxon>Vertebrata</taxon>
        <taxon>Euteleostomi</taxon>
        <taxon>Mammalia</taxon>
        <taxon>Eutheria</taxon>
        <taxon>Laurasiatheria</taxon>
        <taxon>Artiodactyla</taxon>
        <taxon>Ruminantia</taxon>
        <taxon>Pecora</taxon>
        <taxon>Bovidae</taxon>
        <taxon>Caprinae</taxon>
        <taxon>Ovis</taxon>
    </lineage>
</organism>